<gene>
    <name evidence="1" type="primary">ettA</name>
    <name type="synonym">yjjK</name>
    <name type="ordered locus">c5478</name>
</gene>
<feature type="chain" id="PRO_0000449037" description="Energy-dependent translational throttle protein EttA">
    <location>
        <begin position="1"/>
        <end position="555"/>
    </location>
</feature>
<feature type="domain" description="ABC transporter 1" evidence="1">
    <location>
        <begin position="6"/>
        <end position="259"/>
    </location>
</feature>
<feature type="domain" description="ABC transporter 2" evidence="1">
    <location>
        <begin position="324"/>
        <end position="550"/>
    </location>
</feature>
<feature type="region of interest" description="Arm" evidence="1">
    <location>
        <begin position="95"/>
        <end position="139"/>
    </location>
</feature>
<feature type="region of interest" description="PtIM" evidence="1">
    <location>
        <begin position="242"/>
        <end position="322"/>
    </location>
</feature>
<feature type="binding site" evidence="1">
    <location>
        <begin position="39"/>
        <end position="46"/>
    </location>
    <ligand>
        <name>ATP</name>
        <dbReference type="ChEBI" id="CHEBI:30616"/>
        <label>1</label>
    </ligand>
</feature>
<feature type="binding site" evidence="1">
    <location>
        <begin position="356"/>
        <end position="363"/>
    </location>
    <ligand>
        <name>ATP</name>
        <dbReference type="ChEBI" id="CHEBI:30616"/>
        <label>2</label>
    </ligand>
</feature>
<feature type="mutagenesis site" description="Causes growth defect at 18 degrees Celsius in bipA deletion strain; when associated with Q-456 (called EQ2)." evidence="2">
    <original>E</original>
    <variation>Q</variation>
    <location>
        <position position="188"/>
    </location>
</feature>
<feature type="mutagenesis site" description="Causes growth defect at 18 degrees Celsius in bipA deletion strain; when associated with Q-188 (EQ2)." evidence="2">
    <original>E</original>
    <variation>Q</variation>
    <location>
        <position position="470"/>
    </location>
</feature>
<organism>
    <name type="scientific">Escherichia coli O6:H1 (strain CFT073 / ATCC 700928 / UPEC)</name>
    <dbReference type="NCBI Taxonomy" id="199310"/>
    <lineage>
        <taxon>Bacteria</taxon>
        <taxon>Pseudomonadati</taxon>
        <taxon>Pseudomonadota</taxon>
        <taxon>Gammaproteobacteria</taxon>
        <taxon>Enterobacterales</taxon>
        <taxon>Enterobacteriaceae</taxon>
        <taxon>Escherichia</taxon>
    </lineage>
</organism>
<name>ETTA_ECOL6</name>
<protein>
    <recommendedName>
        <fullName evidence="1">Energy-dependent translational throttle protein EttA</fullName>
        <ecNumber evidence="1">3.6.1.-</ecNumber>
    </recommendedName>
    <alternativeName>
        <fullName evidence="1">Translational regulatory factor EttA</fullName>
    </alternativeName>
</protein>
<accession>A0A0H2VFI8</accession>
<reference key="1">
    <citation type="journal article" date="2002" name="Proc. Natl. Acad. Sci. U.S.A.">
        <title>Extensive mosaic structure revealed by the complete genome sequence of uropathogenic Escherichia coli.</title>
        <authorList>
            <person name="Welch R.A."/>
            <person name="Burland V."/>
            <person name="Plunkett G. III"/>
            <person name="Redford P."/>
            <person name="Roesch P."/>
            <person name="Rasko D."/>
            <person name="Buckles E.L."/>
            <person name="Liou S.-R."/>
            <person name="Boutin A."/>
            <person name="Hackett J."/>
            <person name="Stroud D."/>
            <person name="Mayhew G.F."/>
            <person name="Rose D.J."/>
            <person name="Zhou S."/>
            <person name="Schwartz D.C."/>
            <person name="Perna N.T."/>
            <person name="Mobley H.L.T."/>
            <person name="Donnenberg M.S."/>
            <person name="Blattner F.R."/>
        </authorList>
    </citation>
    <scope>NUCLEOTIDE SEQUENCE [LARGE SCALE GENOMIC DNA]</scope>
    <source>
        <strain>CFT073 / ATCC 700928 / UPEC</strain>
    </source>
</reference>
<reference key="2">
    <citation type="journal article" date="2019" name="J. Mol. Biol.">
        <title>ABCF ATPases involved in protein synthesis, ribosome assembly and antibiotic resistance: structural and functional diversification across the tree of life.</title>
        <authorList>
            <person name="Murina V."/>
            <person name="Kasari M."/>
            <person name="Takada H."/>
            <person name="Hinnu M."/>
            <person name="Saha C.K."/>
            <person name="Grimshaw J.W."/>
            <person name="Seki T."/>
            <person name="Reith M."/>
            <person name="Putrins M."/>
            <person name="Tenson T."/>
            <person name="Strahl H."/>
            <person name="Hauryliuk V."/>
            <person name="Atkinson G.C."/>
        </authorList>
    </citation>
    <scope>DISRUPTION PHENOTYPE</scope>
    <scope>MUTAGENESIS OF GLU-188 AND GLU-470</scope>
    <source>
        <strain>CFT073 / ATCC 700928 / UPEC</strain>
    </source>
</reference>
<proteinExistence type="evidence at protein level"/>
<evidence type="ECO:0000255" key="1">
    <source>
        <dbReference type="HAMAP-Rule" id="MF_00847"/>
    </source>
</evidence>
<evidence type="ECO:0000269" key="2">
    <source>
    </source>
</evidence>
<evidence type="ECO:0000303" key="3">
    <source>
    </source>
</evidence>
<sequence>MAQFVYTMHRVGKVVPPKRHILKNISLSFFPGAKIGVLGLNGAGKSTLLRIMAGIDKDIEGEARPQPDIKIGYLPQEPQLNPEHTVRESIEEAVSEVVNALKRLDEVYALYADPDADFDKLAAEQGRLEEIIQAHDGHNLNVQLERAADALRLPDWDAKIANLSGGERRRVALCRLLLEKPDMLLLDEPTNHLDAESVAWLERFLHDFEGTVVAITHDRYFLDNVAGWILELDRGEGIPWEGNYSSWLEQKDQRLAQEASQEAARRKSIEKELEWVRQGTKGRQSKGKARLARFEELNSTEYQKRNETNELFIPPGPRLGDKVLEVSNLRKSYGDRLLIDSLSFSIPKGAIVGIIGPNGAGKSTLFRMISGQEQPDSGTITLGETVKLASVDQFRDSMDNSKTVWEEVSGGLDIMKIGNTEMPSRAYVGRFNFKGVDQGKRVGELSGGERGRLHLAKLLQVGGNMLLLDEPTNDLDIETLRALENALLEFPGCAMVISHDRWFLDRIATHILDYQDEGKVEFFEGNFTEYEEYKKRTLGADALEPKRIKYKRIAK</sequence>
<dbReference type="EC" id="3.6.1.-" evidence="1"/>
<dbReference type="EMBL" id="AE014075">
    <property type="protein sequence ID" value="AAN83898.1"/>
    <property type="molecule type" value="Genomic_DNA"/>
</dbReference>
<dbReference type="RefSeq" id="WP_000046754.1">
    <property type="nucleotide sequence ID" value="NZ_CP051263.1"/>
</dbReference>
<dbReference type="SMR" id="A0A0H2VFI8"/>
<dbReference type="STRING" id="199310.c5478"/>
<dbReference type="KEGG" id="ecc:c5478"/>
<dbReference type="eggNOG" id="COG0488">
    <property type="taxonomic scope" value="Bacteria"/>
</dbReference>
<dbReference type="HOGENOM" id="CLU_000604_36_0_6"/>
<dbReference type="Proteomes" id="UP000001410">
    <property type="component" value="Chromosome"/>
</dbReference>
<dbReference type="GO" id="GO:0005737">
    <property type="term" value="C:cytoplasm"/>
    <property type="evidence" value="ECO:0007669"/>
    <property type="project" value="UniProtKB-SubCell"/>
</dbReference>
<dbReference type="GO" id="GO:0005524">
    <property type="term" value="F:ATP binding"/>
    <property type="evidence" value="ECO:0007669"/>
    <property type="project" value="UniProtKB-UniRule"/>
</dbReference>
<dbReference type="GO" id="GO:0016887">
    <property type="term" value="F:ATP hydrolysis activity"/>
    <property type="evidence" value="ECO:0007669"/>
    <property type="project" value="UniProtKB-UniRule"/>
</dbReference>
<dbReference type="GO" id="GO:0043022">
    <property type="term" value="F:ribosome binding"/>
    <property type="evidence" value="ECO:0007669"/>
    <property type="project" value="UniProtKB-UniRule"/>
</dbReference>
<dbReference type="GO" id="GO:0019843">
    <property type="term" value="F:rRNA binding"/>
    <property type="evidence" value="ECO:0007669"/>
    <property type="project" value="UniProtKB-UniRule"/>
</dbReference>
<dbReference type="GO" id="GO:0000049">
    <property type="term" value="F:tRNA binding"/>
    <property type="evidence" value="ECO:0007669"/>
    <property type="project" value="UniProtKB-UniRule"/>
</dbReference>
<dbReference type="GO" id="GO:0045900">
    <property type="term" value="P:negative regulation of translational elongation"/>
    <property type="evidence" value="ECO:0007669"/>
    <property type="project" value="UniProtKB-UniRule"/>
</dbReference>
<dbReference type="GO" id="GO:0006412">
    <property type="term" value="P:translation"/>
    <property type="evidence" value="ECO:0007669"/>
    <property type="project" value="UniProtKB-KW"/>
</dbReference>
<dbReference type="CDD" id="cd03221">
    <property type="entry name" value="ABCF_EF-3"/>
    <property type="match status" value="2"/>
</dbReference>
<dbReference type="FunFam" id="3.40.50.300:FF:000183">
    <property type="entry name" value="ABC transporter ATP-binding protein yjjK"/>
    <property type="match status" value="1"/>
</dbReference>
<dbReference type="FunFam" id="3.40.50.300:FF:000011">
    <property type="entry name" value="Putative ABC transporter ATP-binding component"/>
    <property type="match status" value="1"/>
</dbReference>
<dbReference type="Gene3D" id="3.40.50.300">
    <property type="entry name" value="P-loop containing nucleotide triphosphate hydrolases"/>
    <property type="match status" value="2"/>
</dbReference>
<dbReference type="HAMAP" id="MF_00847">
    <property type="entry name" value="EttA"/>
    <property type="match status" value="1"/>
</dbReference>
<dbReference type="InterPro" id="IPR003593">
    <property type="entry name" value="AAA+_ATPase"/>
</dbReference>
<dbReference type="InterPro" id="IPR032781">
    <property type="entry name" value="ABC_tran_Xtn"/>
</dbReference>
<dbReference type="InterPro" id="IPR003439">
    <property type="entry name" value="ABC_transporter-like_ATP-bd"/>
</dbReference>
<dbReference type="InterPro" id="IPR017871">
    <property type="entry name" value="ABC_transporter-like_CS"/>
</dbReference>
<dbReference type="InterPro" id="IPR022374">
    <property type="entry name" value="EttA"/>
</dbReference>
<dbReference type="InterPro" id="IPR027417">
    <property type="entry name" value="P-loop_NTPase"/>
</dbReference>
<dbReference type="NCBIfam" id="TIGR03719">
    <property type="entry name" value="ABC_ABC_ChvD"/>
    <property type="match status" value="1"/>
</dbReference>
<dbReference type="NCBIfam" id="NF008775">
    <property type="entry name" value="PRK11819.1"/>
    <property type="match status" value="1"/>
</dbReference>
<dbReference type="PANTHER" id="PTHR43858:SF1">
    <property type="entry name" value="ABC TRANSPORTER-RELATED PROTEIN"/>
    <property type="match status" value="1"/>
</dbReference>
<dbReference type="PANTHER" id="PTHR43858">
    <property type="entry name" value="ENERGY-DEPENDENT TRANSLATIONAL THROTTLE PROTEIN ETTA"/>
    <property type="match status" value="1"/>
</dbReference>
<dbReference type="Pfam" id="PF00005">
    <property type="entry name" value="ABC_tran"/>
    <property type="match status" value="2"/>
</dbReference>
<dbReference type="Pfam" id="PF12848">
    <property type="entry name" value="ABC_tran_Xtn"/>
    <property type="match status" value="1"/>
</dbReference>
<dbReference type="SMART" id="SM00382">
    <property type="entry name" value="AAA"/>
    <property type="match status" value="2"/>
</dbReference>
<dbReference type="SUPFAM" id="SSF52540">
    <property type="entry name" value="P-loop containing nucleoside triphosphate hydrolases"/>
    <property type="match status" value="2"/>
</dbReference>
<dbReference type="PROSITE" id="PS00211">
    <property type="entry name" value="ABC_TRANSPORTER_1"/>
    <property type="match status" value="1"/>
</dbReference>
<dbReference type="PROSITE" id="PS50893">
    <property type="entry name" value="ABC_TRANSPORTER_2"/>
    <property type="match status" value="2"/>
</dbReference>
<comment type="function">
    <text evidence="1">A translation factor that gates the progression of the 70S ribosomal initiation complex (IC, containing tRNA(fMet) in the P-site) into the translation elongation cycle by using a mechanism sensitive to the ATP/ADP ratio. Binds to the 70S ribosome E-site where it modulates the state of the translating ribosome during subunit translocation. ATP hydrolysis probably frees it from the ribosome, which can enter the elongation phase.</text>
</comment>
<comment type="catalytic activity">
    <reaction evidence="1">
        <text>ATP + H2O = ADP + phosphate + H(+)</text>
        <dbReference type="Rhea" id="RHEA:13065"/>
        <dbReference type="ChEBI" id="CHEBI:15377"/>
        <dbReference type="ChEBI" id="CHEBI:15378"/>
        <dbReference type="ChEBI" id="CHEBI:30616"/>
        <dbReference type="ChEBI" id="CHEBI:43474"/>
        <dbReference type="ChEBI" id="CHEBI:456216"/>
    </reaction>
</comment>
<comment type="subunit">
    <text evidence="1">Monomer. Probably contacts ribosomal proteins L1, L5, L33 and S7, the 16S and 23S rRNA and the P-site containing tRNA(fMet).</text>
</comment>
<comment type="subcellular location">
    <subcellularLocation>
        <location evidence="1">Cytoplasm</location>
    </subcellularLocation>
    <text evidence="1">Associates with ribosomes and polysomes.</text>
</comment>
<comment type="domain">
    <text evidence="1">The arm domain is inserted in the first ABC transporter domain. Probably contacts ribosomal protein L1.</text>
</comment>
<comment type="domain">
    <text evidence="1">The P-site tRNA interaction motif (PtIM domain) probably interacts with the P-site tRNA(fMet) as well as the 23S rRNA.</text>
</comment>
<comment type="disruption phenotype">
    <text evidence="2">No visible growth or ribosome-associated phenotype.</text>
</comment>
<comment type="similarity">
    <text evidence="1 3">Belongs to the ABC transporter superfamily. ABCF family. Translational throttle EttA subfamily.</text>
</comment>
<keyword id="KW-0067">ATP-binding</keyword>
<keyword id="KW-0963">Cytoplasm</keyword>
<keyword id="KW-0378">Hydrolase</keyword>
<keyword id="KW-0547">Nucleotide-binding</keyword>
<keyword id="KW-0648">Protein biosynthesis</keyword>
<keyword id="KW-1185">Reference proteome</keyword>
<keyword id="KW-0677">Repeat</keyword>
<keyword id="KW-0694">RNA-binding</keyword>
<keyword id="KW-0699">rRNA-binding</keyword>
<keyword id="KW-0810">Translation regulation</keyword>
<keyword id="KW-0820">tRNA-binding</keyword>